<organism>
    <name type="scientific">Oryza sativa subsp. japonica</name>
    <name type="common">Rice</name>
    <dbReference type="NCBI Taxonomy" id="39947"/>
    <lineage>
        <taxon>Eukaryota</taxon>
        <taxon>Viridiplantae</taxon>
        <taxon>Streptophyta</taxon>
        <taxon>Embryophyta</taxon>
        <taxon>Tracheophyta</taxon>
        <taxon>Spermatophyta</taxon>
        <taxon>Magnoliopsida</taxon>
        <taxon>Liliopsida</taxon>
        <taxon>Poales</taxon>
        <taxon>Poaceae</taxon>
        <taxon>BOP clade</taxon>
        <taxon>Oryzoideae</taxon>
        <taxon>Oryzeae</taxon>
        <taxon>Oryzinae</taxon>
        <taxon>Oryza</taxon>
        <taxon>Oryza sativa</taxon>
    </lineage>
</organism>
<proteinExistence type="evidence at transcript level"/>
<gene>
    <name type="primary">RBR2</name>
    <name type="ordered locus">Os11g0533500</name>
    <name type="ordered locus">LOC_Os11g32900</name>
    <name type="ORF">OsJ_34123</name>
</gene>
<protein>
    <recommendedName>
        <fullName>Retinoblastoma-related protein 2</fullName>
        <shortName>OsRBR2</shortName>
    </recommendedName>
</protein>
<comment type="function">
    <text evidence="1">Regulator of biological processes that recruits a histone deacetylase to control gene transcription. May play a role in the entry into mitosis, negatively regulating the cell proliferation. Formation of stable complexes with geminiviridae replication-associated proteins may create a cellular environment which favors viral DNA replication (By similarity).</text>
</comment>
<comment type="subcellular location">
    <subcellularLocation>
        <location evidence="1">Nucleus</location>
    </subcellularLocation>
</comment>
<comment type="alternative products">
    <event type="alternative splicing"/>
    <isoform>
        <id>Q2R374-1</id>
        <name>1</name>
        <sequence type="displayed"/>
    </isoform>
    <isoform>
        <id>Q2R374-2</id>
        <name>2</name>
        <sequence type="described" ref="VSP_033766 VSP_033767"/>
    </isoform>
</comment>
<comment type="similarity">
    <text evidence="3">Belongs to the retinoblastoma protein (RB) family.</text>
</comment>
<reference key="1">
    <citation type="journal article" date="2007" name="J. Exp. Bot.">
        <title>Dicot and monocot plants differ in retinoblastoma-related protein subfamilies.</title>
        <authorList>
            <person name="Lendvai A."/>
            <person name="Pettko-Szandtner A."/>
            <person name="Csordas-Toth E."/>
            <person name="Miskolczi P."/>
            <person name="Horvath G.V."/>
            <person name="Gyoergyey J."/>
            <person name="Dudits D."/>
        </authorList>
    </citation>
    <scope>NUCLEOTIDE SEQUENCE [MRNA] (ISOFORM 1)</scope>
    <scope>GENE FAMILY</scope>
    <scope>NOMENCLATURE</scope>
    <source>
        <strain>cv. Taipei 309</strain>
    </source>
</reference>
<reference key="2">
    <citation type="journal article" date="2005" name="BMC Biol.">
        <title>The sequence of rice chromosomes 11 and 12, rich in disease resistance genes and recent gene duplications.</title>
        <authorList>
            <consortium name="The rice chromosomes 11 and 12 sequencing consortia"/>
        </authorList>
    </citation>
    <scope>NUCLEOTIDE SEQUENCE [LARGE SCALE GENOMIC DNA]</scope>
    <source>
        <strain>cv. Nipponbare</strain>
    </source>
</reference>
<reference key="3">
    <citation type="journal article" date="2005" name="Nature">
        <title>The map-based sequence of the rice genome.</title>
        <authorList>
            <consortium name="International rice genome sequencing project (IRGSP)"/>
        </authorList>
    </citation>
    <scope>NUCLEOTIDE SEQUENCE [LARGE SCALE GENOMIC DNA]</scope>
    <source>
        <strain>cv. Nipponbare</strain>
    </source>
</reference>
<reference key="4">
    <citation type="journal article" date="2008" name="Nucleic Acids Res.">
        <title>The rice annotation project database (RAP-DB): 2008 update.</title>
        <authorList>
            <consortium name="The rice annotation project (RAP)"/>
        </authorList>
    </citation>
    <scope>GENOME REANNOTATION</scope>
    <source>
        <strain>cv. Nipponbare</strain>
    </source>
</reference>
<reference key="5">
    <citation type="journal article" date="2013" name="Rice">
        <title>Improvement of the Oryza sativa Nipponbare reference genome using next generation sequence and optical map data.</title>
        <authorList>
            <person name="Kawahara Y."/>
            <person name="de la Bastide M."/>
            <person name="Hamilton J.P."/>
            <person name="Kanamori H."/>
            <person name="McCombie W.R."/>
            <person name="Ouyang S."/>
            <person name="Schwartz D.C."/>
            <person name="Tanaka T."/>
            <person name="Wu J."/>
            <person name="Zhou S."/>
            <person name="Childs K.L."/>
            <person name="Davidson R.M."/>
            <person name="Lin H."/>
            <person name="Quesada-Ocampo L."/>
            <person name="Vaillancourt B."/>
            <person name="Sakai H."/>
            <person name="Lee S.S."/>
            <person name="Kim J."/>
            <person name="Numa H."/>
            <person name="Itoh T."/>
            <person name="Buell C.R."/>
            <person name="Matsumoto T."/>
        </authorList>
    </citation>
    <scope>GENOME REANNOTATION</scope>
    <source>
        <strain>cv. Nipponbare</strain>
    </source>
</reference>
<reference key="6">
    <citation type="journal article" date="2005" name="PLoS Biol.">
        <title>The genomes of Oryza sativa: a history of duplications.</title>
        <authorList>
            <person name="Yu J."/>
            <person name="Wang J."/>
            <person name="Lin W."/>
            <person name="Li S."/>
            <person name="Li H."/>
            <person name="Zhou J."/>
            <person name="Ni P."/>
            <person name="Dong W."/>
            <person name="Hu S."/>
            <person name="Zeng C."/>
            <person name="Zhang J."/>
            <person name="Zhang Y."/>
            <person name="Li R."/>
            <person name="Xu Z."/>
            <person name="Li S."/>
            <person name="Li X."/>
            <person name="Zheng H."/>
            <person name="Cong L."/>
            <person name="Lin L."/>
            <person name="Yin J."/>
            <person name="Geng J."/>
            <person name="Li G."/>
            <person name="Shi J."/>
            <person name="Liu J."/>
            <person name="Lv H."/>
            <person name="Li J."/>
            <person name="Wang J."/>
            <person name="Deng Y."/>
            <person name="Ran L."/>
            <person name="Shi X."/>
            <person name="Wang X."/>
            <person name="Wu Q."/>
            <person name="Li C."/>
            <person name="Ren X."/>
            <person name="Wang J."/>
            <person name="Wang X."/>
            <person name="Li D."/>
            <person name="Liu D."/>
            <person name="Zhang X."/>
            <person name="Ji Z."/>
            <person name="Zhao W."/>
            <person name="Sun Y."/>
            <person name="Zhang Z."/>
            <person name="Bao J."/>
            <person name="Han Y."/>
            <person name="Dong L."/>
            <person name="Ji J."/>
            <person name="Chen P."/>
            <person name="Wu S."/>
            <person name="Liu J."/>
            <person name="Xiao Y."/>
            <person name="Bu D."/>
            <person name="Tan J."/>
            <person name="Yang L."/>
            <person name="Ye C."/>
            <person name="Zhang J."/>
            <person name="Xu J."/>
            <person name="Zhou Y."/>
            <person name="Yu Y."/>
            <person name="Zhang B."/>
            <person name="Zhuang S."/>
            <person name="Wei H."/>
            <person name="Liu B."/>
            <person name="Lei M."/>
            <person name="Yu H."/>
            <person name="Li Y."/>
            <person name="Xu H."/>
            <person name="Wei S."/>
            <person name="He X."/>
            <person name="Fang L."/>
            <person name="Zhang Z."/>
            <person name="Zhang Y."/>
            <person name="Huang X."/>
            <person name="Su Z."/>
            <person name="Tong W."/>
            <person name="Li J."/>
            <person name="Tong Z."/>
            <person name="Li S."/>
            <person name="Ye J."/>
            <person name="Wang L."/>
            <person name="Fang L."/>
            <person name="Lei T."/>
            <person name="Chen C.-S."/>
            <person name="Chen H.-C."/>
            <person name="Xu Z."/>
            <person name="Li H."/>
            <person name="Huang H."/>
            <person name="Zhang F."/>
            <person name="Xu H."/>
            <person name="Li N."/>
            <person name="Zhao C."/>
            <person name="Li S."/>
            <person name="Dong L."/>
            <person name="Huang Y."/>
            <person name="Li L."/>
            <person name="Xi Y."/>
            <person name="Qi Q."/>
            <person name="Li W."/>
            <person name="Zhang B."/>
            <person name="Hu W."/>
            <person name="Zhang Y."/>
            <person name="Tian X."/>
            <person name="Jiao Y."/>
            <person name="Liang X."/>
            <person name="Jin J."/>
            <person name="Gao L."/>
            <person name="Zheng W."/>
            <person name="Hao B."/>
            <person name="Liu S.-M."/>
            <person name="Wang W."/>
            <person name="Yuan L."/>
            <person name="Cao M."/>
            <person name="McDermott J."/>
            <person name="Samudrala R."/>
            <person name="Wang J."/>
            <person name="Wong G.K.-S."/>
            <person name="Yang H."/>
        </authorList>
    </citation>
    <scope>NUCLEOTIDE SEQUENCE [LARGE SCALE GENOMIC DNA]</scope>
    <source>
        <strain>cv. Nipponbare</strain>
    </source>
</reference>
<reference key="7">
    <citation type="journal article" date="2003" name="Science">
        <title>Collection, mapping, and annotation of over 28,000 cDNA clones from japonica rice.</title>
        <authorList>
            <consortium name="The rice full-length cDNA consortium"/>
        </authorList>
    </citation>
    <scope>NUCLEOTIDE SEQUENCE [LARGE SCALE MRNA]</scope>
    <source>
        <strain>cv. Nipponbare</strain>
    </source>
</reference>
<name>RBR2_ORYSJ</name>
<sequence>MASQPPAAVEARLADLCKELGVDEGVAGEAAAVLEEGKGALLASPSFGSKSPEDAEKLCFAFVLYCVSKLKETKAGSSGVRLWEILKGCKLKYDDFFKESQRLASRIDQVLGSRYGSDWEARLELKQLENLVNLLADASRFYCKAFNELFLSPSTDQEPGSTTNIPDYIRFGWLLFLILRSKSPELFKDLVSCIHGLVAILAILLIHVPAKFRSFTIEGSSHLIKQTEKGVDLLPSLCHNYHTSEDRLKEMMGKSYKVIEVFFSRKAINASEFKTVNLDKIDTDGLMYFKDLVDDEIFQSNLEKLEKLSSTTGCQGELDLEMFLTSNDYVLNAENSSGSSANFGCSKRVFETLASPTKTIKNMLAAPSSPSSPANGGSIKIVQMTPVTSAMTTAKWLRDVISSLPDKPSSKLEEFLSSCDTDLTSDVVKRVSIILEAIFPTKSIDRGTSIGLNCANAFDIPWAEARKMEASKLYYRVLEAICRAESQNNNVNNLTPLLSNERFHRCLIACSAELVLATHKTVIMMFPAVLESTGLTAFDLSKIIENFVRHEETLPRELKRHLNSLEEQLLESMSWEKGSSLYNSLVVARPSLSTEINSLGLLAEPMPSLDGIVARQSIHPDGLPPTPSKRWPSAGPDGNCYPQSPKRLCTESRNSLVERNSQTPPPKQSQTGLSILKAKYHPLQATFASPTVSNPVSGNEKCAVVGVQIFFSKILKLAAIRIRNLCERLRHEELTVSVYNIFKQILDQQTALFFNRHVDQIILCCLYGVAKVSQLSLTFKEIVNNYKREPQCKPEVFRSIFVGSTNRNGGFGSRHVDIIVFYNQVFVPTVKPLLVALMPSSTRPEDKRNTNSQIPGSPKSSPFSNLPDMSPKKVSSSHNVYVSPLRQTKMDALLSPSSRSFYACIGESTQAFQSPSKDLAAINSRLNYPTRRINTRINFDMVSDSVVAGSLGQPNGGSASSDPAAAFSPLSKKSKTDS</sequence>
<evidence type="ECO:0000250" key="1"/>
<evidence type="ECO:0000256" key="2">
    <source>
        <dbReference type="SAM" id="MobiDB-lite"/>
    </source>
</evidence>
<evidence type="ECO:0000305" key="3"/>
<keyword id="KW-0025">Alternative splicing</keyword>
<keyword id="KW-0131">Cell cycle</keyword>
<keyword id="KW-0539">Nucleus</keyword>
<keyword id="KW-1185">Reference proteome</keyword>
<keyword id="KW-0678">Repressor</keyword>
<keyword id="KW-0804">Transcription</keyword>
<keyword id="KW-0805">Transcription regulation</keyword>
<accession>Q2R374</accession>
<accession>A0A0P0Y3E4</accession>
<accession>A3CBY4</accession>
<accession>A9UL16</accession>
<accession>B7EAB3</accession>
<accession>Q2R375</accession>
<dbReference type="EMBL" id="AY941775">
    <property type="protein sequence ID" value="AAY23369.1"/>
    <property type="molecule type" value="mRNA"/>
</dbReference>
<dbReference type="EMBL" id="DP000010">
    <property type="protein sequence ID" value="ABA94065.2"/>
    <property type="molecule type" value="Genomic_DNA"/>
</dbReference>
<dbReference type="EMBL" id="DP000010">
    <property type="protein sequence ID" value="ABA94066.2"/>
    <property type="molecule type" value="Genomic_DNA"/>
</dbReference>
<dbReference type="EMBL" id="AP008217">
    <property type="protein sequence ID" value="BAF28383.1"/>
    <property type="molecule type" value="Genomic_DNA"/>
</dbReference>
<dbReference type="EMBL" id="AP014967">
    <property type="protein sequence ID" value="BAT14296.1"/>
    <property type="molecule type" value="Genomic_DNA"/>
</dbReference>
<dbReference type="EMBL" id="CM000148">
    <property type="protein sequence ID" value="EEE52218.1"/>
    <property type="molecule type" value="Genomic_DNA"/>
</dbReference>
<dbReference type="EMBL" id="AK064987">
    <property type="protein sequence ID" value="BAG89310.1"/>
    <property type="molecule type" value="mRNA"/>
</dbReference>
<dbReference type="RefSeq" id="XP_015617546.1">
    <property type="nucleotide sequence ID" value="XM_015762060.1"/>
</dbReference>
<dbReference type="SMR" id="Q2R374"/>
<dbReference type="FunCoup" id="Q2R374">
    <property type="interactions" value="1405"/>
</dbReference>
<dbReference type="STRING" id="39947.Q2R374"/>
<dbReference type="iPTMnet" id="Q2R374"/>
<dbReference type="PaxDb" id="39947-Q2R374"/>
<dbReference type="EnsemblPlants" id="Os11t0533500-01">
    <molecule id="Q2R374-1"/>
    <property type="protein sequence ID" value="Os11t0533500-01"/>
    <property type="gene ID" value="Os11g0533500"/>
</dbReference>
<dbReference type="EnsemblPlants" id="Os11t0533500-02">
    <molecule id="Q2R374-1"/>
    <property type="protein sequence ID" value="Os11t0533500-02"/>
    <property type="gene ID" value="Os11g0533500"/>
</dbReference>
<dbReference type="Gramene" id="Os11t0533500-01">
    <molecule id="Q2R374-1"/>
    <property type="protein sequence ID" value="Os11t0533500-01"/>
    <property type="gene ID" value="Os11g0533500"/>
</dbReference>
<dbReference type="Gramene" id="Os11t0533500-02">
    <molecule id="Q2R374-1"/>
    <property type="protein sequence ID" value="Os11t0533500-02"/>
    <property type="gene ID" value="Os11g0533500"/>
</dbReference>
<dbReference type="KEGG" id="dosa:Os11g0533500"/>
<dbReference type="eggNOG" id="KOG1010">
    <property type="taxonomic scope" value="Eukaryota"/>
</dbReference>
<dbReference type="HOGENOM" id="CLU_015949_0_0_1"/>
<dbReference type="InParanoid" id="Q2R374"/>
<dbReference type="OMA" id="DYIRFGW"/>
<dbReference type="OrthoDB" id="844594at2759"/>
<dbReference type="PlantReactome" id="R-OSA-9640887">
    <property type="pathway name" value="G1/S transition"/>
</dbReference>
<dbReference type="Proteomes" id="UP000000763">
    <property type="component" value="Chromosome 11"/>
</dbReference>
<dbReference type="Proteomes" id="UP000007752">
    <property type="component" value="Chromosome 11"/>
</dbReference>
<dbReference type="Proteomes" id="UP000059680">
    <property type="component" value="Chromosome 11"/>
</dbReference>
<dbReference type="GO" id="GO:0000785">
    <property type="term" value="C:chromatin"/>
    <property type="evidence" value="ECO:0000318"/>
    <property type="project" value="GO_Central"/>
</dbReference>
<dbReference type="GO" id="GO:0005634">
    <property type="term" value="C:nucleus"/>
    <property type="evidence" value="ECO:0007669"/>
    <property type="project" value="UniProtKB-SubCell"/>
</dbReference>
<dbReference type="GO" id="GO:0005667">
    <property type="term" value="C:transcription regulator complex"/>
    <property type="evidence" value="ECO:0000318"/>
    <property type="project" value="GO_Central"/>
</dbReference>
<dbReference type="GO" id="GO:0000977">
    <property type="term" value="F:RNA polymerase II transcription regulatory region sequence-specific DNA binding"/>
    <property type="evidence" value="ECO:0000318"/>
    <property type="project" value="GO_Central"/>
</dbReference>
<dbReference type="GO" id="GO:0030154">
    <property type="term" value="P:cell differentiation"/>
    <property type="evidence" value="ECO:0000318"/>
    <property type="project" value="GO_Central"/>
</dbReference>
<dbReference type="GO" id="GO:2000134">
    <property type="term" value="P:negative regulation of G1/S transition of mitotic cell cycle"/>
    <property type="evidence" value="ECO:0000318"/>
    <property type="project" value="GO_Central"/>
</dbReference>
<dbReference type="GO" id="GO:0006357">
    <property type="term" value="P:regulation of transcription by RNA polymerase II"/>
    <property type="evidence" value="ECO:0007669"/>
    <property type="project" value="InterPro"/>
</dbReference>
<dbReference type="FunFam" id="1.10.472.10:FF:000030">
    <property type="entry name" value="Retinoblastoma-related protein 1"/>
    <property type="match status" value="1"/>
</dbReference>
<dbReference type="FunFam" id="1.10.472.10:FF:000075">
    <property type="entry name" value="Retinoblastoma-related protein 2"/>
    <property type="match status" value="1"/>
</dbReference>
<dbReference type="Gene3D" id="1.10.472.10">
    <property type="entry name" value="Cyclin-like"/>
    <property type="match status" value="2"/>
</dbReference>
<dbReference type="InterPro" id="IPR036915">
    <property type="entry name" value="Cyclin-like_sf"/>
</dbReference>
<dbReference type="InterPro" id="IPR002720">
    <property type="entry name" value="RB_A"/>
</dbReference>
<dbReference type="InterPro" id="IPR002719">
    <property type="entry name" value="RB_B"/>
</dbReference>
<dbReference type="InterPro" id="IPR015030">
    <property type="entry name" value="RB_C"/>
</dbReference>
<dbReference type="InterPro" id="IPR028309">
    <property type="entry name" value="RB_fam"/>
</dbReference>
<dbReference type="InterPro" id="IPR024599">
    <property type="entry name" value="RB_N"/>
</dbReference>
<dbReference type="PANTHER" id="PTHR13742">
    <property type="entry name" value="RETINOBLASTOMA-ASSOCIATED PROTEIN RB -RELATED"/>
    <property type="match status" value="1"/>
</dbReference>
<dbReference type="PANTHER" id="PTHR13742:SF22">
    <property type="entry name" value="RETINOBLASTOMA-RELATED PROTEIN 2"/>
    <property type="match status" value="1"/>
</dbReference>
<dbReference type="Pfam" id="PF11934">
    <property type="entry name" value="DUF3452"/>
    <property type="match status" value="1"/>
</dbReference>
<dbReference type="Pfam" id="PF01858">
    <property type="entry name" value="RB_A"/>
    <property type="match status" value="1"/>
</dbReference>
<dbReference type="Pfam" id="PF01857">
    <property type="entry name" value="RB_B"/>
    <property type="match status" value="1"/>
</dbReference>
<dbReference type="Pfam" id="PF08934">
    <property type="entry name" value="Rb_C"/>
    <property type="match status" value="1"/>
</dbReference>
<dbReference type="SMART" id="SM01367">
    <property type="entry name" value="DUF3452"/>
    <property type="match status" value="1"/>
</dbReference>
<dbReference type="SMART" id="SM01368">
    <property type="entry name" value="RB_A"/>
    <property type="match status" value="1"/>
</dbReference>
<dbReference type="SUPFAM" id="SSF47954">
    <property type="entry name" value="Cyclin-like"/>
    <property type="match status" value="2"/>
</dbReference>
<feature type="chain" id="PRO_0000335251" description="Retinoblastoma-related protein 2">
    <location>
        <begin position="1"/>
        <end position="978"/>
    </location>
</feature>
<feature type="region of interest" description="Pocket">
    <location>
        <begin position="385"/>
        <end position="832"/>
    </location>
</feature>
<feature type="region of interest" description="Domain A">
    <location>
        <begin position="385"/>
        <end position="585"/>
    </location>
</feature>
<feature type="region of interest" description="Spacer">
    <location>
        <begin position="586"/>
        <end position="704"/>
    </location>
</feature>
<feature type="region of interest" description="Disordered" evidence="2">
    <location>
        <begin position="616"/>
        <end position="645"/>
    </location>
</feature>
<feature type="region of interest" description="Domain B">
    <location>
        <begin position="705"/>
        <end position="832"/>
    </location>
</feature>
<feature type="region of interest" description="Disordered" evidence="2">
    <location>
        <begin position="841"/>
        <end position="878"/>
    </location>
</feature>
<feature type="region of interest" description="Disordered" evidence="2">
    <location>
        <begin position="947"/>
        <end position="978"/>
    </location>
</feature>
<feature type="compositionally biased region" description="Polar residues" evidence="2">
    <location>
        <begin position="850"/>
        <end position="864"/>
    </location>
</feature>
<feature type="compositionally biased region" description="Low complexity" evidence="2">
    <location>
        <begin position="958"/>
        <end position="971"/>
    </location>
</feature>
<feature type="splice variant" id="VSP_033766" description="In isoform 2." evidence="3">
    <original>QIPGSPKSSPFSNLPDMSPKK</original>
    <variation>ISSILFSQFKPANSPLNSSYN</variation>
    <location>
        <begin position="853"/>
        <end position="873"/>
    </location>
</feature>
<feature type="splice variant" id="VSP_033767" description="In isoform 2." evidence="3">
    <location>
        <begin position="874"/>
        <end position="978"/>
    </location>
</feature>
<feature type="sequence conflict" description="In Ref. 1; AAY23369." evidence="3" ref="1">
    <original>G</original>
    <variation>C</variation>
    <location>
        <position position="28"/>
    </location>
</feature>
<feature type="sequence conflict" description="In Ref. 1; AAY23369." evidence="3" ref="1">
    <original>K</original>
    <variation>R</variation>
    <location>
        <position position="87"/>
    </location>
</feature>
<feature type="sequence conflict" description="In Ref. 1; AAY23369." evidence="3" ref="1">
    <original>A</original>
    <variation>V</variation>
    <location>
        <position position="104"/>
    </location>
</feature>
<feature type="sequence conflict" description="In Ref. 1; AAY23369." evidence="3" ref="1">
    <original>L</original>
    <variation>S</variation>
    <location>
        <position position="128"/>
    </location>
</feature>
<feature type="sequence conflict" description="In Ref. 1; AAY23369." evidence="3" ref="1">
    <original>DT</original>
    <variation>NM</variation>
    <location>
        <begin position="420"/>
        <end position="421"/>
    </location>
</feature>
<feature type="sequence conflict" description="In Ref. 1; AAY23369." evidence="3" ref="1">
    <original>W</original>
    <variation>R</variation>
    <location>
        <position position="631"/>
    </location>
</feature>
<feature type="sequence conflict" description="In Ref. 1; AAY23369." evidence="3" ref="1">
    <original>R</original>
    <variation>H</variation>
    <location>
        <position position="659"/>
    </location>
</feature>